<sequence>MAGKRKRANAPDQTERRSSVRVQKVRQKALDEKARLVQERVKLLSDRKSEICVDDTELHEKEEENVDGSPKRRSPPKLTAMQKGKQKLSVSLNGKDVNLEPHLKVTKCLRLFNKQYLLCVQAKLSRPDLKGVTEMIKAKAILYPRKIIGDLPGIDVGHRFFSRAEMCAVGFHNHWLNGIDYMSMEYEKEYSNYKLPLAVSIVMSGQYEDDLDNADTVTYTGQGGHNLTGNKRQIKDQLLERGNLALKHCCEYNVPVRVTRGHNCKSSYTKRVYTYDGLYKVEKFWAQKGVSGFTVYKYRLKRLEGQPELTTDQVNFVAGRIPTSTSEIEGLVCEDISGGLEFKGIPATNRVDDSPVSPTSGFTYIKSLIIEPNVIIPKSSTGCNCRGSCTDSKKCACAKLNGGNFPYVDLNDGRLIESRDVVFECGPHCGCGPKCVNRTSQKRLRFNLEVFRSAKKGWAVRSWEYIPAGSPVCEYIGVVRRTADVDTISDNEYIFEIDCQQTMQGLGGRQRRLRDVAVPMNNGVSQSSEDENAPEFCIDAGSTGNFARFINHSCEPNLFVQCVLSSHQDIRLARVVLFAADNISPMQELTYDYGYALDSVHGPDGKVKQLACYCGALNCRKRLY</sequence>
<organism>
    <name type="scientific">Arabidopsis thaliana</name>
    <name type="common">Mouse-ear cress</name>
    <dbReference type="NCBI Taxonomy" id="3702"/>
    <lineage>
        <taxon>Eukaryota</taxon>
        <taxon>Viridiplantae</taxon>
        <taxon>Streptophyta</taxon>
        <taxon>Embryophyta</taxon>
        <taxon>Tracheophyta</taxon>
        <taxon>Spermatophyta</taxon>
        <taxon>Magnoliopsida</taxon>
        <taxon>eudicotyledons</taxon>
        <taxon>Gunneridae</taxon>
        <taxon>Pentapetalae</taxon>
        <taxon>rosids</taxon>
        <taxon>malvids</taxon>
        <taxon>Brassicales</taxon>
        <taxon>Brassicaceae</taxon>
        <taxon>Camelineae</taxon>
        <taxon>Arabidopsis</taxon>
    </lineage>
</organism>
<comment type="function">
    <text evidence="9 10 11 12 13">Histone methyltransferase. Methylates 'Lys-9' of histone H3. H3 'Lys-9' methylation represents a specific tag for epigenetic transcriptional repression. The silencing mechanism via DNA CpNpG methylation requires the targeting of chromomethylase CMT3 to methylated histones, probably through an interaction with an HP1-like adapter. By its function, KYP is directly required for the maintenance of the DNA CpNpG and asymmetric methylation. Involved in the silencing of transposable elements.</text>
</comment>
<comment type="catalytic activity">
    <reaction evidence="15 16">
        <text>N(6)-methyl-L-lysyl(9)-[histone H3] + S-adenosyl-L-methionine = N(6),N(6)-dimethyl-L-lysyl(9)-[histone H3] + S-adenosyl-L-homocysteine + H(+)</text>
        <dbReference type="Rhea" id="RHEA:60284"/>
        <dbReference type="Rhea" id="RHEA-COMP:15541"/>
        <dbReference type="Rhea" id="RHEA-COMP:15542"/>
        <dbReference type="ChEBI" id="CHEBI:15378"/>
        <dbReference type="ChEBI" id="CHEBI:57856"/>
        <dbReference type="ChEBI" id="CHEBI:59789"/>
        <dbReference type="ChEBI" id="CHEBI:61929"/>
        <dbReference type="ChEBI" id="CHEBI:61976"/>
    </reaction>
</comment>
<comment type="catalytic activity">
    <reaction evidence="15 16">
        <text>L-lysyl(9)-[histone H3] + S-adenosyl-L-methionine = N(6)-methyl-L-lysyl(9)-[histone H3] + S-adenosyl-L-homocysteine + H(+)</text>
        <dbReference type="Rhea" id="RHEA:60280"/>
        <dbReference type="Rhea" id="RHEA-COMP:15542"/>
        <dbReference type="Rhea" id="RHEA-COMP:15546"/>
        <dbReference type="ChEBI" id="CHEBI:15378"/>
        <dbReference type="ChEBI" id="CHEBI:29969"/>
        <dbReference type="ChEBI" id="CHEBI:57856"/>
        <dbReference type="ChEBI" id="CHEBI:59789"/>
        <dbReference type="ChEBI" id="CHEBI:61929"/>
        <dbReference type="EC" id="2.1.1.367"/>
    </reaction>
</comment>
<comment type="subunit">
    <text>Interacts with H3 histone.</text>
</comment>
<comment type="interaction">
    <interactant intactId="EBI-16175525">
        <id>Q8GZB6</id>
    </interactant>
    <interactant intactId="EBI-16175508">
        <id>P03562</id>
        <label>AL2</label>
    </interactant>
    <organismsDiffer>true</organismsDiffer>
    <experiments>4</experiments>
</comment>
<comment type="interaction">
    <interactant intactId="EBI-16175525">
        <id>Q8GZB6</id>
    </interactant>
    <interactant intactId="EBI-16175606">
        <id>Q96703</id>
        <label>AL2</label>
    </interactant>
    <organismsDiffer>true</organismsDiffer>
    <experiments>2</experiments>
</comment>
<comment type="subcellular location">
    <subcellularLocation>
        <location>Nucleus</location>
    </subcellularLocation>
    <subcellularLocation>
        <location>Chromosome</location>
    </subcellularLocation>
    <subcellularLocation>
        <location>Chromosome</location>
        <location>Centromere</location>
    </subcellularLocation>
    <text>Associates with centromeric constitutive heterochromatin and at a lower level with regions of euchromatin.</text>
</comment>
<comment type="tissue specificity">
    <text evidence="8">Expressed in leaves stems and flowers.</text>
</comment>
<comment type="domain">
    <text>Although the SET domain contains the active site of enzymatic activity, both pre-SET and post-SET domains are required for methyltransferase activity.</text>
</comment>
<comment type="domain">
    <text evidence="1">In the pre-SET domain, Cys residues bind 3 zinc ions that are arranged in a triangular cluster; some of these Cys residues contribute to the binding of two zinc ions within the cluster.</text>
</comment>
<comment type="miscellaneous">
    <text>Mutations in the KYP/SUVH4 gene decrease the level of histone H3-K9 dimethylated, trimethylated or dimethylated in association with H3-K14Ac by factors of 4,3 and 3, respectively. The level of monomethylated H3-K9 is unchanged. Such mutations lead to a drastic decrease of cytosine methylation at CpNpG sites, causing the reactivation of endogenous retrotransposons. The KRYPTONYTE methyltransferase name was given according to its involvement in SUPERMAN gene silencing.</text>
</comment>
<comment type="similarity">
    <text evidence="6">Belongs to the class V-like SAM-binding methyltransferase superfamily. Histone-lysine methyltransferase family. Suvar3-9 subfamily.</text>
</comment>
<gene>
    <name type="primary">SUVH4</name>
    <name type="synonym">KYP</name>
    <name type="synonym">SDG33</name>
    <name type="synonym">SET33</name>
    <name type="ordered locus">At5g13960</name>
    <name type="ORF">MAC12.7</name>
</gene>
<keyword id="KW-0002">3D-structure</keyword>
<keyword id="KW-0137">Centromere</keyword>
<keyword id="KW-0156">Chromatin regulator</keyword>
<keyword id="KW-0158">Chromosome</keyword>
<keyword id="KW-0479">Metal-binding</keyword>
<keyword id="KW-0489">Methyltransferase</keyword>
<keyword id="KW-0539">Nucleus</keyword>
<keyword id="KW-1185">Reference proteome</keyword>
<keyword id="KW-0949">S-adenosyl-L-methionine</keyword>
<keyword id="KW-0808">Transferase</keyword>
<keyword id="KW-0862">Zinc</keyword>
<dbReference type="EC" id="2.1.1.-" evidence="15 16"/>
<dbReference type="EC" id="2.1.1.367" evidence="15 16"/>
<dbReference type="EMBL" id="AF344447">
    <property type="protein sequence ID" value="AAK28969.1"/>
    <property type="molecule type" value="mRNA"/>
</dbReference>
<dbReference type="EMBL" id="AF538715">
    <property type="protein sequence ID" value="AAO17392.1"/>
    <property type="molecule type" value="Genomic_DNA"/>
</dbReference>
<dbReference type="EMBL" id="AB005230">
    <property type="protein sequence ID" value="BAB11124.1"/>
    <property type="molecule type" value="Genomic_DNA"/>
</dbReference>
<dbReference type="EMBL" id="CP002688">
    <property type="protein sequence ID" value="AED91966.1"/>
    <property type="molecule type" value="Genomic_DNA"/>
</dbReference>
<dbReference type="EMBL" id="BT002313">
    <property type="protein sequence ID" value="AAN86146.1"/>
    <property type="molecule type" value="mRNA"/>
</dbReference>
<dbReference type="RefSeq" id="NP_196900.1">
    <property type="nucleotide sequence ID" value="NM_121399.3"/>
</dbReference>
<dbReference type="PDB" id="4QEN">
    <property type="method" value="X-ray"/>
    <property type="resolution" value="2.00 A"/>
    <property type="chains" value="A=93-624"/>
</dbReference>
<dbReference type="PDB" id="4QEO">
    <property type="method" value="X-ray"/>
    <property type="resolution" value="2.00 A"/>
    <property type="chains" value="A=93-624"/>
</dbReference>
<dbReference type="PDB" id="4QEP">
    <property type="method" value="X-ray"/>
    <property type="resolution" value="3.10 A"/>
    <property type="chains" value="A=93-624"/>
</dbReference>
<dbReference type="PDBsum" id="4QEN"/>
<dbReference type="PDBsum" id="4QEO"/>
<dbReference type="PDBsum" id="4QEP"/>
<dbReference type="SMR" id="Q8GZB6"/>
<dbReference type="BioGRID" id="16522">
    <property type="interactions" value="1"/>
</dbReference>
<dbReference type="DIP" id="DIP-62058N"/>
<dbReference type="FunCoup" id="Q8GZB6">
    <property type="interactions" value="981"/>
</dbReference>
<dbReference type="IntAct" id="Q8GZB6">
    <property type="interactions" value="3"/>
</dbReference>
<dbReference type="STRING" id="3702.Q8GZB6"/>
<dbReference type="GlyGen" id="Q8GZB6">
    <property type="glycosylation" value="2 sites"/>
</dbReference>
<dbReference type="iPTMnet" id="Q8GZB6"/>
<dbReference type="PaxDb" id="3702-AT5G13960.1"/>
<dbReference type="ProteomicsDB" id="226520"/>
<dbReference type="EnsemblPlants" id="AT5G13960.1">
    <property type="protein sequence ID" value="AT5G13960.1"/>
    <property type="gene ID" value="AT5G13960"/>
</dbReference>
<dbReference type="GeneID" id="831244"/>
<dbReference type="Gramene" id="AT5G13960.1">
    <property type="protein sequence ID" value="AT5G13960.1"/>
    <property type="gene ID" value="AT5G13960"/>
</dbReference>
<dbReference type="KEGG" id="ath:AT5G13960"/>
<dbReference type="Araport" id="AT5G13960"/>
<dbReference type="TAIR" id="AT5G13960">
    <property type="gene designation" value="SUVH4"/>
</dbReference>
<dbReference type="eggNOG" id="KOG1082">
    <property type="taxonomic scope" value="Eukaryota"/>
</dbReference>
<dbReference type="HOGENOM" id="CLU_004556_3_1_1"/>
<dbReference type="InParanoid" id="Q8GZB6"/>
<dbReference type="OrthoDB" id="5792673at2759"/>
<dbReference type="PhylomeDB" id="Q8GZB6"/>
<dbReference type="EvolutionaryTrace" id="Q8GZB6"/>
<dbReference type="PRO" id="PR:Q8GZB6"/>
<dbReference type="Proteomes" id="UP000006548">
    <property type="component" value="Chromosome 5"/>
</dbReference>
<dbReference type="ExpressionAtlas" id="Q8GZB6">
    <property type="expression patterns" value="baseline and differential"/>
</dbReference>
<dbReference type="GO" id="GO:0000775">
    <property type="term" value="C:chromosome, centromeric region"/>
    <property type="evidence" value="ECO:0007669"/>
    <property type="project" value="UniProtKB-SubCell"/>
</dbReference>
<dbReference type="GO" id="GO:0005634">
    <property type="term" value="C:nucleus"/>
    <property type="evidence" value="ECO:0007669"/>
    <property type="project" value="UniProtKB-SubCell"/>
</dbReference>
<dbReference type="GO" id="GO:0010385">
    <property type="term" value="F:double-stranded methylated DNA binding"/>
    <property type="evidence" value="ECO:0000314"/>
    <property type="project" value="TAIR"/>
</dbReference>
<dbReference type="GO" id="GO:0046974">
    <property type="term" value="F:histone H3K9 methyltransferase activity"/>
    <property type="evidence" value="ECO:0000314"/>
    <property type="project" value="TAIR"/>
</dbReference>
<dbReference type="GO" id="GO:0140947">
    <property type="term" value="F:histone H3K9me2 methyltransferase activity"/>
    <property type="evidence" value="ECO:0007669"/>
    <property type="project" value="RHEA"/>
</dbReference>
<dbReference type="GO" id="GO:0008327">
    <property type="term" value="F:methyl-CpG binding"/>
    <property type="evidence" value="ECO:0000314"/>
    <property type="project" value="TAIR"/>
</dbReference>
<dbReference type="GO" id="GO:0010428">
    <property type="term" value="F:methyl-CpNpG binding"/>
    <property type="evidence" value="ECO:0000314"/>
    <property type="project" value="TAIR"/>
</dbReference>
<dbReference type="GO" id="GO:0010429">
    <property type="term" value="F:methyl-CpNpN binding"/>
    <property type="evidence" value="ECO:0000314"/>
    <property type="project" value="TAIR"/>
</dbReference>
<dbReference type="GO" id="GO:0008270">
    <property type="term" value="F:zinc ion binding"/>
    <property type="evidence" value="ECO:0007669"/>
    <property type="project" value="InterPro"/>
</dbReference>
<dbReference type="GO" id="GO:0018022">
    <property type="term" value="P:peptidyl-lysine methylation"/>
    <property type="evidence" value="ECO:0000314"/>
    <property type="project" value="TAIR"/>
</dbReference>
<dbReference type="CDD" id="cd10545">
    <property type="entry name" value="SET_AtSUVH-like"/>
    <property type="match status" value="1"/>
</dbReference>
<dbReference type="FunFam" id="2.30.280.10:FF:000003">
    <property type="entry name" value="Histone-lysine N-methyltransferase, H3 lysine-9 specific SUVH5"/>
    <property type="match status" value="1"/>
</dbReference>
<dbReference type="Gene3D" id="2.170.270.10">
    <property type="entry name" value="SET domain"/>
    <property type="match status" value="1"/>
</dbReference>
<dbReference type="Gene3D" id="2.30.280.10">
    <property type="entry name" value="SRA-YDG"/>
    <property type="match status" value="1"/>
</dbReference>
<dbReference type="InterPro" id="IPR025794">
    <property type="entry name" value="H3-K9-MeTrfase_plant"/>
</dbReference>
<dbReference type="InterPro" id="IPR051357">
    <property type="entry name" value="H3K9_HMTase_SUVAR3-9"/>
</dbReference>
<dbReference type="InterPro" id="IPR003616">
    <property type="entry name" value="Post-SET_dom"/>
</dbReference>
<dbReference type="InterPro" id="IPR007728">
    <property type="entry name" value="Pre-SET_dom"/>
</dbReference>
<dbReference type="InterPro" id="IPR015947">
    <property type="entry name" value="PUA-like_sf"/>
</dbReference>
<dbReference type="InterPro" id="IPR001214">
    <property type="entry name" value="SET_dom"/>
</dbReference>
<dbReference type="InterPro" id="IPR046341">
    <property type="entry name" value="SET_dom_sf"/>
</dbReference>
<dbReference type="InterPro" id="IPR036987">
    <property type="entry name" value="SRA-YDG_sf"/>
</dbReference>
<dbReference type="InterPro" id="IPR003105">
    <property type="entry name" value="SRA_YDG"/>
</dbReference>
<dbReference type="PANTHER" id="PTHR45660">
    <property type="entry name" value="HISTONE-LYSINE N-METHYLTRANSFERASE SETMAR"/>
    <property type="match status" value="1"/>
</dbReference>
<dbReference type="PANTHER" id="PTHR45660:SF94">
    <property type="entry name" value="HISTONE-LYSINE N-METHYLTRANSFERASE, H3 LYSINE-9 SPECIFIC SUVH4"/>
    <property type="match status" value="1"/>
</dbReference>
<dbReference type="Pfam" id="PF05033">
    <property type="entry name" value="Pre-SET"/>
    <property type="match status" value="1"/>
</dbReference>
<dbReference type="Pfam" id="PF02182">
    <property type="entry name" value="SAD_SRA"/>
    <property type="match status" value="1"/>
</dbReference>
<dbReference type="Pfam" id="PF00856">
    <property type="entry name" value="SET"/>
    <property type="match status" value="1"/>
</dbReference>
<dbReference type="SMART" id="SM00468">
    <property type="entry name" value="PreSET"/>
    <property type="match status" value="1"/>
</dbReference>
<dbReference type="SMART" id="SM00317">
    <property type="entry name" value="SET"/>
    <property type="match status" value="1"/>
</dbReference>
<dbReference type="SMART" id="SM00466">
    <property type="entry name" value="SRA"/>
    <property type="match status" value="1"/>
</dbReference>
<dbReference type="SUPFAM" id="SSF88697">
    <property type="entry name" value="PUA domain-like"/>
    <property type="match status" value="1"/>
</dbReference>
<dbReference type="SUPFAM" id="SSF82199">
    <property type="entry name" value="SET domain"/>
    <property type="match status" value="1"/>
</dbReference>
<dbReference type="PROSITE" id="PS50868">
    <property type="entry name" value="POST_SET"/>
    <property type="match status" value="1"/>
</dbReference>
<dbReference type="PROSITE" id="PS50867">
    <property type="entry name" value="PRE_SET"/>
    <property type="match status" value="1"/>
</dbReference>
<dbReference type="PROSITE" id="PS51575">
    <property type="entry name" value="SAM_MT43_SUVAR39_2"/>
    <property type="match status" value="1"/>
</dbReference>
<dbReference type="PROSITE" id="PS50280">
    <property type="entry name" value="SET"/>
    <property type="match status" value="1"/>
</dbReference>
<dbReference type="PROSITE" id="PS51015">
    <property type="entry name" value="YDG"/>
    <property type="match status" value="1"/>
</dbReference>
<feature type="chain" id="PRO_0000186075" description="Histone-lysine N-methyltransferase, H3 lysine-9 specific SUVH4">
    <location>
        <begin position="1"/>
        <end position="624"/>
    </location>
</feature>
<feature type="domain" description="YDG" evidence="5">
    <location>
        <begin position="149"/>
        <end position="302"/>
    </location>
</feature>
<feature type="domain" description="Pre-SET" evidence="3">
    <location>
        <begin position="381"/>
        <end position="443"/>
    </location>
</feature>
<feature type="domain" description="SET" evidence="4">
    <location>
        <begin position="446"/>
        <end position="594"/>
    </location>
</feature>
<feature type="domain" description="Post-SET" evidence="2">
    <location>
        <begin position="608"/>
        <end position="624"/>
    </location>
</feature>
<feature type="region of interest" description="Disordered" evidence="7">
    <location>
        <begin position="1"/>
        <end position="25"/>
    </location>
</feature>
<feature type="region of interest" description="Disordered" evidence="7">
    <location>
        <begin position="54"/>
        <end position="86"/>
    </location>
</feature>
<feature type="binding site" evidence="1">
    <location>
        <position position="383"/>
    </location>
    <ligand>
        <name>Zn(2+)</name>
        <dbReference type="ChEBI" id="CHEBI:29105"/>
        <label>1</label>
    </ligand>
</feature>
<feature type="binding site" evidence="1">
    <location>
        <position position="383"/>
    </location>
    <ligand>
        <name>Zn(2+)</name>
        <dbReference type="ChEBI" id="CHEBI:29105"/>
        <label>2</label>
    </ligand>
</feature>
<feature type="binding site" evidence="1">
    <location>
        <position position="385"/>
    </location>
    <ligand>
        <name>Zn(2+)</name>
        <dbReference type="ChEBI" id="CHEBI:29105"/>
        <label>1</label>
    </ligand>
</feature>
<feature type="binding site" evidence="1">
    <location>
        <position position="389"/>
    </location>
    <ligand>
        <name>Zn(2+)</name>
        <dbReference type="ChEBI" id="CHEBI:29105"/>
        <label>1</label>
    </ligand>
</feature>
<feature type="binding site" evidence="1">
    <location>
        <position position="389"/>
    </location>
    <ligand>
        <name>Zn(2+)</name>
        <dbReference type="ChEBI" id="CHEBI:29105"/>
        <label>3</label>
    </ligand>
</feature>
<feature type="binding site" evidence="1">
    <location>
        <position position="395"/>
    </location>
    <ligand>
        <name>Zn(2+)</name>
        <dbReference type="ChEBI" id="CHEBI:29105"/>
        <label>1</label>
    </ligand>
</feature>
<feature type="binding site" evidence="1">
    <location>
        <position position="397"/>
    </location>
    <ligand>
        <name>Zn(2+)</name>
        <dbReference type="ChEBI" id="CHEBI:29105"/>
        <label>2</label>
    </ligand>
</feature>
<feature type="binding site" evidence="1">
    <location>
        <position position="425"/>
    </location>
    <ligand>
        <name>Zn(2+)</name>
        <dbReference type="ChEBI" id="CHEBI:29105"/>
        <label>2</label>
    </ligand>
</feature>
<feature type="binding site" evidence="1">
    <location>
        <position position="425"/>
    </location>
    <ligand>
        <name>Zn(2+)</name>
        <dbReference type="ChEBI" id="CHEBI:29105"/>
        <label>3</label>
    </ligand>
</feature>
<feature type="binding site" evidence="1">
    <location>
        <position position="429"/>
    </location>
    <ligand>
        <name>Zn(2+)</name>
        <dbReference type="ChEBI" id="CHEBI:29105"/>
        <label>2</label>
    </ligand>
</feature>
<feature type="binding site" evidence="1">
    <location>
        <position position="431"/>
    </location>
    <ligand>
        <name>Zn(2+)</name>
        <dbReference type="ChEBI" id="CHEBI:29105"/>
        <label>3</label>
    </ligand>
</feature>
<feature type="binding site" evidence="1">
    <location>
        <position position="435"/>
    </location>
    <ligand>
        <name>Zn(2+)</name>
        <dbReference type="ChEBI" id="CHEBI:29105"/>
        <label>3</label>
    </ligand>
</feature>
<feature type="binding site" evidence="1">
    <location>
        <begin position="456"/>
        <end position="458"/>
    </location>
    <ligand>
        <name>S-adenosyl-L-methionine</name>
        <dbReference type="ChEBI" id="CHEBI:59789"/>
    </ligand>
</feature>
<feature type="binding site" evidence="4">
    <location>
        <position position="493"/>
    </location>
    <ligand>
        <name>S-adenosyl-L-methionine</name>
        <dbReference type="ChEBI" id="CHEBI:59789"/>
    </ligand>
</feature>
<feature type="binding site" evidence="4">
    <location>
        <position position="548"/>
    </location>
    <ligand>
        <name>S-adenosyl-L-methionine</name>
        <dbReference type="ChEBI" id="CHEBI:59789"/>
    </ligand>
</feature>
<feature type="binding site" evidence="1">
    <location>
        <begin position="551"/>
        <end position="552"/>
    </location>
    <ligand>
        <name>S-adenosyl-L-methionine</name>
        <dbReference type="ChEBI" id="CHEBI:59789"/>
    </ligand>
</feature>
<feature type="binding site" evidence="1">
    <location>
        <position position="554"/>
    </location>
    <ligand>
        <name>Zn(2+)</name>
        <dbReference type="ChEBI" id="CHEBI:29105"/>
        <label>4</label>
    </ligand>
</feature>
<feature type="binding site" evidence="1">
    <location>
        <position position="612"/>
    </location>
    <ligand>
        <name>Zn(2+)</name>
        <dbReference type="ChEBI" id="CHEBI:29105"/>
        <label>4</label>
    </ligand>
</feature>
<feature type="binding site" evidence="1">
    <location>
        <position position="614"/>
    </location>
    <ligand>
        <name>Zn(2+)</name>
        <dbReference type="ChEBI" id="CHEBI:29105"/>
        <label>4</label>
    </ligand>
</feature>
<feature type="binding site" evidence="1">
    <location>
        <position position="619"/>
    </location>
    <ligand>
        <name>Zn(2+)</name>
        <dbReference type="ChEBI" id="CHEBI:29105"/>
        <label>4</label>
    </ligand>
</feature>
<feature type="sequence conflict" description="In Ref. 2; AAO17392." evidence="14" ref="2">
    <original>E</original>
    <variation>D</variation>
    <location>
        <position position="189"/>
    </location>
</feature>
<feature type="sequence conflict" description="In Ref. 1; AAK28969." evidence="14" ref="1">
    <original>R</original>
    <variation>T</variation>
    <location>
        <position position="548"/>
    </location>
</feature>
<feature type="sequence conflict" description="In Ref. 1; AAK28969." evidence="14" ref="1">
    <original>V</original>
    <variation>A</variation>
    <location>
        <position position="576"/>
    </location>
</feature>
<feature type="helix" evidence="18">
    <location>
        <begin position="101"/>
        <end position="121"/>
    </location>
</feature>
<feature type="helix" evidence="18">
    <location>
        <begin position="127"/>
        <end position="137"/>
    </location>
</feature>
<feature type="strand" evidence="18">
    <location>
        <begin position="159"/>
        <end position="162"/>
    </location>
</feature>
<feature type="helix" evidence="18">
    <location>
        <begin position="163"/>
        <end position="168"/>
    </location>
</feature>
<feature type="strand" evidence="17">
    <location>
        <begin position="170"/>
        <end position="172"/>
    </location>
</feature>
<feature type="strand" evidence="18">
    <location>
        <begin position="178"/>
        <end position="182"/>
    </location>
</feature>
<feature type="helix" evidence="18">
    <location>
        <begin position="184"/>
        <end position="186"/>
    </location>
</feature>
<feature type="turn" evidence="18">
    <location>
        <begin position="187"/>
        <end position="192"/>
    </location>
</feature>
<feature type="strand" evidence="18">
    <location>
        <begin position="197"/>
        <end position="203"/>
    </location>
</feature>
<feature type="strand" evidence="18">
    <location>
        <begin position="211"/>
        <end position="213"/>
    </location>
</feature>
<feature type="strand" evidence="18">
    <location>
        <begin position="216"/>
        <end position="220"/>
    </location>
</feature>
<feature type="strand" evidence="18">
    <location>
        <begin position="222"/>
        <end position="225"/>
    </location>
</feature>
<feature type="strand" evidence="17">
    <location>
        <begin position="227"/>
        <end position="230"/>
    </location>
</feature>
<feature type="strand" evidence="19">
    <location>
        <begin position="239"/>
        <end position="241"/>
    </location>
</feature>
<feature type="helix" evidence="18">
    <location>
        <begin position="242"/>
        <end position="252"/>
    </location>
</feature>
<feature type="strand" evidence="18">
    <location>
        <begin position="256"/>
        <end position="263"/>
    </location>
</feature>
<feature type="strand" evidence="18">
    <location>
        <begin position="271"/>
        <end position="288"/>
    </location>
</feature>
<feature type="strand" evidence="18">
    <location>
        <begin position="292"/>
        <end position="302"/>
    </location>
</feature>
<feature type="strand" evidence="18">
    <location>
        <begin position="304"/>
        <end position="306"/>
    </location>
</feature>
<feature type="strand" evidence="18">
    <location>
        <begin position="331"/>
        <end position="334"/>
    </location>
</feature>
<feature type="strand" evidence="17">
    <location>
        <begin position="336"/>
        <end position="339"/>
    </location>
</feature>
<feature type="strand" evidence="18">
    <location>
        <begin position="341"/>
        <end position="343"/>
    </location>
</feature>
<feature type="turn" evidence="18">
    <location>
        <begin position="358"/>
        <end position="361"/>
    </location>
</feature>
<feature type="strand" evidence="18">
    <location>
        <begin position="386"/>
        <end position="388"/>
    </location>
</feature>
<feature type="turn" evidence="18">
    <location>
        <begin position="392"/>
        <end position="394"/>
    </location>
</feature>
<feature type="helix" evidence="18">
    <location>
        <begin position="396"/>
        <end position="400"/>
    </location>
</feature>
<feature type="strand" evidence="18">
    <location>
        <begin position="406"/>
        <end position="410"/>
    </location>
</feature>
<feature type="strand" evidence="19">
    <location>
        <begin position="420"/>
        <end position="423"/>
    </location>
</feature>
<feature type="helix" evidence="18">
    <location>
        <begin position="436"/>
        <end position="441"/>
    </location>
</feature>
<feature type="strand" evidence="18">
    <location>
        <begin position="448"/>
        <end position="452"/>
    </location>
</feature>
<feature type="strand" evidence="18">
    <location>
        <begin position="454"/>
        <end position="456"/>
    </location>
</feature>
<feature type="strand" evidence="18">
    <location>
        <begin position="458"/>
        <end position="464"/>
    </location>
</feature>
<feature type="strand" evidence="18">
    <location>
        <begin position="471"/>
        <end position="474"/>
    </location>
</feature>
<feature type="strand" evidence="18">
    <location>
        <begin position="477"/>
        <end position="481"/>
    </location>
</feature>
<feature type="helix" evidence="18">
    <location>
        <begin position="482"/>
        <end position="484"/>
    </location>
</feature>
<feature type="strand" evidence="18">
    <location>
        <begin position="494"/>
        <end position="496"/>
    </location>
</feature>
<feature type="strand" evidence="18">
    <location>
        <begin position="536"/>
        <end position="539"/>
    </location>
</feature>
<feature type="strand" evidence="18">
    <location>
        <begin position="541"/>
        <end position="544"/>
    </location>
</feature>
<feature type="helix" evidence="18">
    <location>
        <begin position="546"/>
        <end position="549"/>
    </location>
</feature>
<feature type="strand" evidence="18">
    <location>
        <begin position="557"/>
        <end position="567"/>
    </location>
</feature>
<feature type="helix" evidence="18">
    <location>
        <begin position="570"/>
        <end position="572"/>
    </location>
</feature>
<feature type="strand" evidence="18">
    <location>
        <begin position="574"/>
        <end position="581"/>
    </location>
</feature>
<feature type="strand" evidence="18">
    <location>
        <begin position="603"/>
        <end position="605"/>
    </location>
</feature>
<proteinExistence type="evidence at protein level"/>
<protein>
    <recommendedName>
        <fullName>Histone-lysine N-methyltransferase, H3 lysine-9 specific SUVH4</fullName>
        <ecNumber evidence="15 16">2.1.1.-</ecNumber>
        <ecNumber evidence="15 16">2.1.1.367</ecNumber>
    </recommendedName>
    <alternativeName>
        <fullName>Histone H3-K9 methyltransferase 4</fullName>
        <shortName>H3-K9-HMTase 4</shortName>
    </alternativeName>
    <alternativeName>
        <fullName>Protein KRYPTONITE</fullName>
    </alternativeName>
    <alternativeName>
        <fullName>Protein SET DOMAIN GROUP 33</fullName>
    </alternativeName>
    <alternativeName>
        <fullName>Suppressor of variegation 3-9 homolog protein 4</fullName>
        <shortName>Su(var)3-9 homolog protein 4</shortName>
    </alternativeName>
</protein>
<reference key="1">
    <citation type="journal article" date="2001" name="Nucleic Acids Res.">
        <title>The Arabidopsis thaliana genome contains at least 29 active genes encoding SET domain proteins that can be assigned to four evolutionarily conserved classes.</title>
        <authorList>
            <person name="Baumbusch L.O."/>
            <person name="Thorstensen T."/>
            <person name="Krauss V."/>
            <person name="Fischer A."/>
            <person name="Naumann K."/>
            <person name="Assalkhou R."/>
            <person name="Schulz I."/>
            <person name="Reuter G."/>
            <person name="Aalen R.B."/>
        </authorList>
    </citation>
    <scope>NUCLEOTIDE SEQUENCE [MRNA]</scope>
    <scope>NOMENCLATURE</scope>
    <scope>TISSUE SPECIFICITY</scope>
</reference>
<reference key="2">
    <citation type="journal article" date="2002" name="EMBO J.">
        <title>An Arabidopsis SET domain protein required for maintenance but not establishment of DNA methylation.</title>
        <authorList>
            <person name="Malagnac F."/>
            <person name="Bartee L."/>
            <person name="Bender J."/>
        </authorList>
    </citation>
    <scope>NUCLEOTIDE SEQUENCE [GENOMIC DNA]</scope>
    <source>
        <strain>cv. Wassilewskija</strain>
    </source>
</reference>
<reference key="3">
    <citation type="journal article" date="1997" name="DNA Res.">
        <title>Structural analysis of Arabidopsis thaliana chromosome 5. I. Sequence features of the 1.6 Mb regions covered by twenty physically assigned P1 clones.</title>
        <authorList>
            <person name="Sato S."/>
            <person name="Kotani H."/>
            <person name="Nakamura Y."/>
            <person name="Kaneko T."/>
            <person name="Asamizu E."/>
            <person name="Fukami M."/>
            <person name="Miyajima N."/>
            <person name="Tabata S."/>
        </authorList>
    </citation>
    <scope>NUCLEOTIDE SEQUENCE [LARGE SCALE GENOMIC DNA]</scope>
    <source>
        <strain>cv. Columbia</strain>
    </source>
</reference>
<reference key="4">
    <citation type="journal article" date="2017" name="Plant J.">
        <title>Araport11: a complete reannotation of the Arabidopsis thaliana reference genome.</title>
        <authorList>
            <person name="Cheng C.Y."/>
            <person name="Krishnakumar V."/>
            <person name="Chan A.P."/>
            <person name="Thibaud-Nissen F."/>
            <person name="Schobel S."/>
            <person name="Town C.D."/>
        </authorList>
    </citation>
    <scope>GENOME REANNOTATION</scope>
    <source>
        <strain>cv. Columbia</strain>
    </source>
</reference>
<reference key="5">
    <citation type="journal article" date="2003" name="Science">
        <title>Empirical analysis of transcriptional activity in the Arabidopsis genome.</title>
        <authorList>
            <person name="Yamada K."/>
            <person name="Lim J."/>
            <person name="Dale J.M."/>
            <person name="Chen H."/>
            <person name="Shinn P."/>
            <person name="Palm C.J."/>
            <person name="Southwick A.M."/>
            <person name="Wu H.C."/>
            <person name="Kim C.J."/>
            <person name="Nguyen M."/>
            <person name="Pham P.K."/>
            <person name="Cheuk R.F."/>
            <person name="Karlin-Newmann G."/>
            <person name="Liu S.X."/>
            <person name="Lam B."/>
            <person name="Sakano H."/>
            <person name="Wu T."/>
            <person name="Yu G."/>
            <person name="Miranda M."/>
            <person name="Quach H.L."/>
            <person name="Tripp M."/>
            <person name="Chang C.H."/>
            <person name="Lee J.M."/>
            <person name="Toriumi M.J."/>
            <person name="Chan M.M."/>
            <person name="Tang C.C."/>
            <person name="Onodera C.S."/>
            <person name="Deng J.M."/>
            <person name="Akiyama K."/>
            <person name="Ansari Y."/>
            <person name="Arakawa T."/>
            <person name="Banh J."/>
            <person name="Banno F."/>
            <person name="Bowser L."/>
            <person name="Brooks S.Y."/>
            <person name="Carninci P."/>
            <person name="Chao Q."/>
            <person name="Choy N."/>
            <person name="Enju A."/>
            <person name="Goldsmith A.D."/>
            <person name="Gurjal M."/>
            <person name="Hansen N.F."/>
            <person name="Hayashizaki Y."/>
            <person name="Johnson-Hopson C."/>
            <person name="Hsuan V.W."/>
            <person name="Iida K."/>
            <person name="Karnes M."/>
            <person name="Khan S."/>
            <person name="Koesema E."/>
            <person name="Ishida J."/>
            <person name="Jiang P.X."/>
            <person name="Jones T."/>
            <person name="Kawai J."/>
            <person name="Kamiya A."/>
            <person name="Meyers C."/>
            <person name="Nakajima M."/>
            <person name="Narusaka M."/>
            <person name="Seki M."/>
            <person name="Sakurai T."/>
            <person name="Satou M."/>
            <person name="Tamse R."/>
            <person name="Vaysberg M."/>
            <person name="Wallender E.K."/>
            <person name="Wong C."/>
            <person name="Yamamura Y."/>
            <person name="Yuan S."/>
            <person name="Shinozaki K."/>
            <person name="Davis R.W."/>
            <person name="Theologis A."/>
            <person name="Ecker J.R."/>
        </authorList>
    </citation>
    <scope>NUCLEOTIDE SEQUENCE [LARGE SCALE MRNA]</scope>
    <source>
        <strain>cv. Columbia</strain>
    </source>
</reference>
<reference key="6">
    <citation type="journal article" date="2002" name="Nature">
        <title>Control of CpNpG DNA methylation by the KRYPTONITE histone H3 methyltransferase.</title>
        <authorList>
            <person name="Jackson J.P."/>
            <person name="Lindroth A.M."/>
            <person name="Cao X."/>
            <person name="Jacobsen S.E."/>
        </authorList>
    </citation>
    <scope>FUNCTION</scope>
    <scope>MUTANTS KYP-1; KYP-2 AND KYP-3</scope>
</reference>
<reference key="7">
    <citation type="journal article" date="2002" name="Curr. Biol.">
        <title>Interplay between two epigenetic marks: DNA methylation and histone H3 lysine 9 methylation.</title>
        <authorList>
            <person name="Johnson L.M."/>
            <person name="Cao X."/>
            <person name="Jacobsen S.E."/>
        </authorList>
    </citation>
    <scope>EPIGENETIC METHYLATION</scope>
</reference>
<reference key="8">
    <citation type="journal article" date="2004" name="EMBO J.">
        <title>Dual histone H3 methylation marks at lysines 9 and 27 required for interaction with CHROMOMETHYLASE3.</title>
        <authorList>
            <person name="Lindroth A.M."/>
            <person name="Shultis D."/>
            <person name="Jasencakova Z."/>
            <person name="Fuchs J."/>
            <person name="Johnson L."/>
            <person name="Schubert D."/>
            <person name="Patnaik D."/>
            <person name="Pradhan S."/>
            <person name="Goodrich J."/>
            <person name="Schubert I."/>
            <person name="Jenuwein T."/>
            <person name="Khorasanizadeh S."/>
            <person name="Jacobsen S.E."/>
        </authorList>
    </citation>
    <scope>FUNCTION</scope>
</reference>
<reference key="9">
    <citation type="journal article" date="2004" name="Nucleic Acids Res.">
        <title>Mass spectrometry analysis of Arabidopsis histone H3 reveals distinct combinations of post-translational modifications.</title>
        <authorList>
            <person name="Johnson L."/>
            <person name="Mollah S."/>
            <person name="Garcia B.A."/>
            <person name="Muratore T.L."/>
            <person name="Shabanowitz J."/>
            <person name="Hunt D.F."/>
            <person name="Jacobsen S.E."/>
        </authorList>
    </citation>
    <scope>FUNCTION</scope>
</reference>
<reference key="10">
    <citation type="journal article" date="2005" name="Genome Biol.">
        <title>Chromatin and siRNA pathways cooperate to maintain DNA methylation of small transposable elements in Arabidopsis.</title>
        <authorList>
            <person name="Tran R.K."/>
            <person name="Zilberman D."/>
            <person name="de Bustos C."/>
            <person name="Ditt R.F."/>
            <person name="Henikoff J.G."/>
            <person name="Lindroth A.M."/>
            <person name="Delrow J."/>
            <person name="Boyle T."/>
            <person name="Kwong S."/>
            <person name="Bryson T.D."/>
            <person name="Jacobsen S.E."/>
            <person name="Henikoff S."/>
        </authorList>
    </citation>
    <scope>FUNCTION</scope>
</reference>
<reference key="11">
    <citation type="journal article" date="2005" name="Mol. Cell. Biol.">
        <title>H3 lysine 9 methylation is maintained on a transcribed inverted repeat by combined action of SUVH6 and SUVH4 methyltransferases.</title>
        <authorList>
            <person name="Ebbs M.L."/>
            <person name="Bartee L."/>
            <person name="Bender J."/>
        </authorList>
    </citation>
    <scope>FUNCTION</scope>
</reference>
<reference key="12">
    <citation type="journal article" date="2006" name="J. Plant Physiol.">
        <title>Heterochromatin proteins and the control of heterochromatic gene silencing in Arabidopsis.</title>
        <authorList>
            <person name="Fischer A."/>
            <person name="Hofmann I."/>
            <person name="Naumann K."/>
            <person name="Reuter G."/>
        </authorList>
    </citation>
    <scope>GENE FAMILY</scope>
</reference>
<accession>Q8GZB6</accession>
<accession>Q9C5P3</accession>
<accession>Q9FFX9</accession>
<name>SUVH4_ARATH</name>
<evidence type="ECO:0000250" key="1"/>
<evidence type="ECO:0000255" key="2">
    <source>
        <dbReference type="PROSITE-ProRule" id="PRU00155"/>
    </source>
</evidence>
<evidence type="ECO:0000255" key="3">
    <source>
        <dbReference type="PROSITE-ProRule" id="PRU00157"/>
    </source>
</evidence>
<evidence type="ECO:0000255" key="4">
    <source>
        <dbReference type="PROSITE-ProRule" id="PRU00190"/>
    </source>
</evidence>
<evidence type="ECO:0000255" key="5">
    <source>
        <dbReference type="PROSITE-ProRule" id="PRU00358"/>
    </source>
</evidence>
<evidence type="ECO:0000255" key="6">
    <source>
        <dbReference type="PROSITE-ProRule" id="PRU00908"/>
    </source>
</evidence>
<evidence type="ECO:0000256" key="7">
    <source>
        <dbReference type="SAM" id="MobiDB-lite"/>
    </source>
</evidence>
<evidence type="ECO:0000269" key="8">
    <source>
    </source>
</evidence>
<evidence type="ECO:0000269" key="9">
    <source>
    </source>
</evidence>
<evidence type="ECO:0000269" key="10">
    <source>
    </source>
</evidence>
<evidence type="ECO:0000269" key="11">
    <source>
    </source>
</evidence>
<evidence type="ECO:0000269" key="12">
    <source>
    </source>
</evidence>
<evidence type="ECO:0000269" key="13">
    <source>
    </source>
</evidence>
<evidence type="ECO:0000305" key="14"/>
<evidence type="ECO:0000305" key="15">
    <source>
    </source>
</evidence>
<evidence type="ECO:0000305" key="16">
    <source>
    </source>
</evidence>
<evidence type="ECO:0007829" key="17">
    <source>
        <dbReference type="PDB" id="4QEN"/>
    </source>
</evidence>
<evidence type="ECO:0007829" key="18">
    <source>
        <dbReference type="PDB" id="4QEO"/>
    </source>
</evidence>
<evidence type="ECO:0007829" key="19">
    <source>
        <dbReference type="PDB" id="4QEP"/>
    </source>
</evidence>